<comment type="function">
    <text evidence="1">Key regulator of mitochondrial quality that mediates the repairing or degradation of unhealthy mitochondria in response to mitochondrial damage. Mediator of mitochondrial protein catabolic process (also named MALM) by mediating the degradation of damaged proteins inside mitochondria by promoting the accumulation in the mitochondrial matrix of hydrolases that are characteristic of the lysosomal lumen. Also involved in mitochondrion degradation of damaged mitochondria by promoting the formation of vacuole-like structures (named MIV), which engulf and degrade unhealthy mitochondria by accumulating lysosomes. Binds cardiolipin. May form molecular condensates (non-membrane-bounded organelles) within mitochondria that compartmentalize and promote cardiolipin metabolism.</text>
</comment>
<comment type="subcellular location">
    <subcellularLocation>
        <location evidence="1">Cytoplasm</location>
        <location evidence="1">Cytosol</location>
    </subcellularLocation>
    <subcellularLocation>
        <location evidence="1">Mitochondrion outer membrane</location>
    </subcellularLocation>
    <subcellularLocation>
        <location evidence="1">Mitochondrion matrix</location>
    </subcellularLocation>
    <text evidence="1">Localizes to the cytosol under normal conditions. Relocalizes to mitochondrion outer membrane following cellular stress. May form molecular condensates in the mitochondrial matrix. Colocalizes with BNIP3 and BNIP3L at the mitochondrion outer membrane.</text>
</comment>
<comment type="similarity">
    <text evidence="4">Belongs to the MIEAP family.</text>
</comment>
<feature type="chain" id="PRO_0000408331" description="Mitochondria-eating protein">
    <location>
        <begin position="1"/>
        <end position="479"/>
    </location>
</feature>
<feature type="region of interest" description="Disordered" evidence="3">
    <location>
        <begin position="220"/>
        <end position="251"/>
    </location>
</feature>
<feature type="region of interest" description="Disordered" evidence="3">
    <location>
        <begin position="456"/>
        <end position="479"/>
    </location>
</feature>
<feature type="coiled-coil region" evidence="2">
    <location>
        <begin position="109"/>
        <end position="161"/>
    </location>
</feature>
<feature type="coiled-coil region" evidence="2">
    <location>
        <begin position="187"/>
        <end position="223"/>
    </location>
</feature>
<feature type="compositionally biased region" description="Low complexity" evidence="3">
    <location>
        <begin position="235"/>
        <end position="249"/>
    </location>
</feature>
<sequence>MAGSLKKLAKAESCRLMQEKLESWSKDYEINSCDQNLNQCCELIEMTSVIQGQLFTILNETSRESGHYAGVDTIKTRLLPWLGTWFSHATSGRLFETGLFLNQDSTETERKLRQLATSQTLQLQDLQEELTSTRLELNHVQQDLAQTQLALEDTKTQLATTLLTAADEIIQLRAVLKASRAQEEDSLRRLDHLNDCEQQIERLRDELSILDAQKSVLQSRIARSRSPSPRRIRSRSPSPLPLRSCSPGRARSTNASRHAFLVARFGDIYSKDRFDAERILRTYISDMEMVQRIIYTAAVESFHAAKMAYRQFKMRVRKTLSIGHSGPESLEDTVMDYIVRHEDLYDVQASVNEVIRSMNINPKISSTPECDFAVISSFIRELCRVAFSMQTLTPPLDVAFGMDGEFFSETKYHRSVDSDYTAALVAYHVWPALMENDVVIVKGEAVTKRGALWSHRSRSRSQNRSRSVSPLLSHLSRSR</sequence>
<protein>
    <recommendedName>
        <fullName>Mitochondria-eating protein</fullName>
    </recommendedName>
    <alternativeName>
        <fullName>Spermatogenesis-associated protein 18</fullName>
    </alternativeName>
</protein>
<accession>E1BW58</accession>
<dbReference type="EMBL" id="AADN02031293">
    <property type="status" value="NOT_ANNOTATED_CDS"/>
    <property type="molecule type" value="Genomic_DNA"/>
</dbReference>
<dbReference type="SMR" id="E1BW58"/>
<dbReference type="FunCoup" id="E1BW58">
    <property type="interactions" value="7"/>
</dbReference>
<dbReference type="STRING" id="9031.ENSGALP00000022597"/>
<dbReference type="VEuPathDB" id="HostDB:geneid_422759"/>
<dbReference type="eggNOG" id="ENOG502QQMJ">
    <property type="taxonomic scope" value="Eukaryota"/>
</dbReference>
<dbReference type="InParanoid" id="E1BW58"/>
<dbReference type="OrthoDB" id="5966837at2759"/>
<dbReference type="PhylomeDB" id="E1BW58"/>
<dbReference type="TreeFam" id="TF328808"/>
<dbReference type="Proteomes" id="UP000000539">
    <property type="component" value="Unassembled WGS sequence"/>
</dbReference>
<dbReference type="GO" id="GO:0005737">
    <property type="term" value="C:cytoplasm"/>
    <property type="evidence" value="ECO:0000250"/>
    <property type="project" value="UniProtKB"/>
</dbReference>
<dbReference type="GO" id="GO:0005829">
    <property type="term" value="C:cytosol"/>
    <property type="evidence" value="ECO:0007669"/>
    <property type="project" value="UniProtKB-SubCell"/>
</dbReference>
<dbReference type="GO" id="GO:0043231">
    <property type="term" value="C:intracellular membrane-bounded organelle"/>
    <property type="evidence" value="ECO:0000250"/>
    <property type="project" value="UniProtKB"/>
</dbReference>
<dbReference type="GO" id="GO:0005759">
    <property type="term" value="C:mitochondrial matrix"/>
    <property type="evidence" value="ECO:0000250"/>
    <property type="project" value="UniProtKB"/>
</dbReference>
<dbReference type="GO" id="GO:0005741">
    <property type="term" value="C:mitochondrial outer membrane"/>
    <property type="evidence" value="ECO:0000318"/>
    <property type="project" value="GO_Central"/>
</dbReference>
<dbReference type="GO" id="GO:0005739">
    <property type="term" value="C:mitochondrion"/>
    <property type="evidence" value="ECO:0000250"/>
    <property type="project" value="UniProtKB"/>
</dbReference>
<dbReference type="GO" id="GO:1901612">
    <property type="term" value="F:cardiolipin binding"/>
    <property type="evidence" value="ECO:0000250"/>
    <property type="project" value="UniProtKB"/>
</dbReference>
<dbReference type="GO" id="GO:0035694">
    <property type="term" value="P:mitochondrial protein catabolic process"/>
    <property type="evidence" value="ECO:0000250"/>
    <property type="project" value="UniProtKB"/>
</dbReference>
<dbReference type="GO" id="GO:0035695">
    <property type="term" value="P:mitophagy by internal vacuole formation"/>
    <property type="evidence" value="ECO:0000318"/>
    <property type="project" value="GO_Central"/>
</dbReference>
<dbReference type="InterPro" id="IPR026169">
    <property type="entry name" value="MIEAP"/>
</dbReference>
<dbReference type="InterPro" id="IPR031981">
    <property type="entry name" value="MIEAP_C"/>
</dbReference>
<dbReference type="PANTHER" id="PTHR21771:SF0">
    <property type="entry name" value="MITOCHONDRIA-EATING PROTEIN"/>
    <property type="match status" value="1"/>
</dbReference>
<dbReference type="PANTHER" id="PTHR21771">
    <property type="entry name" value="MITOCHONDRIA-EATING PROTEIN-RELATED"/>
    <property type="match status" value="1"/>
</dbReference>
<dbReference type="Pfam" id="PF16026">
    <property type="entry name" value="MIEAP"/>
    <property type="match status" value="1"/>
</dbReference>
<proteinExistence type="inferred from homology"/>
<organism>
    <name type="scientific">Gallus gallus</name>
    <name type="common">Chicken</name>
    <dbReference type="NCBI Taxonomy" id="9031"/>
    <lineage>
        <taxon>Eukaryota</taxon>
        <taxon>Metazoa</taxon>
        <taxon>Chordata</taxon>
        <taxon>Craniata</taxon>
        <taxon>Vertebrata</taxon>
        <taxon>Euteleostomi</taxon>
        <taxon>Archelosauria</taxon>
        <taxon>Archosauria</taxon>
        <taxon>Dinosauria</taxon>
        <taxon>Saurischia</taxon>
        <taxon>Theropoda</taxon>
        <taxon>Coelurosauria</taxon>
        <taxon>Aves</taxon>
        <taxon>Neognathae</taxon>
        <taxon>Galloanserae</taxon>
        <taxon>Galliformes</taxon>
        <taxon>Phasianidae</taxon>
        <taxon>Phasianinae</taxon>
        <taxon>Gallus</taxon>
    </lineage>
</organism>
<gene>
    <name type="primary">SPATA18</name>
    <name type="synonym">MIEAP</name>
</gene>
<name>MIEAP_CHICK</name>
<evidence type="ECO:0000250" key="1">
    <source>
        <dbReference type="UniProtKB" id="Q8TC71"/>
    </source>
</evidence>
<evidence type="ECO:0000255" key="2"/>
<evidence type="ECO:0000256" key="3">
    <source>
        <dbReference type="SAM" id="MobiDB-lite"/>
    </source>
</evidence>
<evidence type="ECO:0000305" key="4"/>
<keyword id="KW-0175">Coiled coil</keyword>
<keyword id="KW-0963">Cytoplasm</keyword>
<keyword id="KW-0446">Lipid-binding</keyword>
<keyword id="KW-0472">Membrane</keyword>
<keyword id="KW-0496">Mitochondrion</keyword>
<keyword id="KW-1000">Mitochondrion outer membrane</keyword>
<keyword id="KW-1185">Reference proteome</keyword>
<reference key="1">
    <citation type="journal article" date="2004" name="Nature">
        <title>Sequence and comparative analysis of the chicken genome provide unique perspectives on vertebrate evolution.</title>
        <authorList>
            <person name="Hillier L.W."/>
            <person name="Miller W."/>
            <person name="Birney E."/>
            <person name="Warren W."/>
            <person name="Hardison R.C."/>
            <person name="Ponting C.P."/>
            <person name="Bork P."/>
            <person name="Burt D.W."/>
            <person name="Groenen M.A.M."/>
            <person name="Delany M.E."/>
            <person name="Dodgson J.B."/>
            <person name="Chinwalla A.T."/>
            <person name="Cliften P.F."/>
            <person name="Clifton S.W."/>
            <person name="Delehaunty K.D."/>
            <person name="Fronick C."/>
            <person name="Fulton R.S."/>
            <person name="Graves T.A."/>
            <person name="Kremitzki C."/>
            <person name="Layman D."/>
            <person name="Magrini V."/>
            <person name="McPherson J.D."/>
            <person name="Miner T.L."/>
            <person name="Minx P."/>
            <person name="Nash W.E."/>
            <person name="Nhan M.N."/>
            <person name="Nelson J.O."/>
            <person name="Oddy L.G."/>
            <person name="Pohl C.S."/>
            <person name="Randall-Maher J."/>
            <person name="Smith S.M."/>
            <person name="Wallis J.W."/>
            <person name="Yang S.-P."/>
            <person name="Romanov M.N."/>
            <person name="Rondelli C.M."/>
            <person name="Paton B."/>
            <person name="Smith J."/>
            <person name="Morrice D."/>
            <person name="Daniels L."/>
            <person name="Tempest H.G."/>
            <person name="Robertson L."/>
            <person name="Masabanda J.S."/>
            <person name="Griffin D.K."/>
            <person name="Vignal A."/>
            <person name="Fillon V."/>
            <person name="Jacobbson L."/>
            <person name="Kerje S."/>
            <person name="Andersson L."/>
            <person name="Crooijmans R.P."/>
            <person name="Aerts J."/>
            <person name="van der Poel J.J."/>
            <person name="Ellegren H."/>
            <person name="Caldwell R.B."/>
            <person name="Hubbard S.J."/>
            <person name="Grafham D.V."/>
            <person name="Kierzek A.M."/>
            <person name="McLaren S.R."/>
            <person name="Overton I.M."/>
            <person name="Arakawa H."/>
            <person name="Beattie K.J."/>
            <person name="Bezzubov Y."/>
            <person name="Boardman P.E."/>
            <person name="Bonfield J.K."/>
            <person name="Croning M.D.R."/>
            <person name="Davies R.M."/>
            <person name="Francis M.D."/>
            <person name="Humphray S.J."/>
            <person name="Scott C.E."/>
            <person name="Taylor R.G."/>
            <person name="Tickle C."/>
            <person name="Brown W.R.A."/>
            <person name="Rogers J."/>
            <person name="Buerstedde J.-M."/>
            <person name="Wilson S.A."/>
            <person name="Stubbs L."/>
            <person name="Ovcharenko I."/>
            <person name="Gordon L."/>
            <person name="Lucas S."/>
            <person name="Miller M.M."/>
            <person name="Inoko H."/>
            <person name="Shiina T."/>
            <person name="Kaufman J."/>
            <person name="Salomonsen J."/>
            <person name="Skjoedt K."/>
            <person name="Wong G.K.-S."/>
            <person name="Wang J."/>
            <person name="Liu B."/>
            <person name="Wang J."/>
            <person name="Yu J."/>
            <person name="Yang H."/>
            <person name="Nefedov M."/>
            <person name="Koriabine M."/>
            <person name="Dejong P.J."/>
            <person name="Goodstadt L."/>
            <person name="Webber C."/>
            <person name="Dickens N.J."/>
            <person name="Letunic I."/>
            <person name="Suyama M."/>
            <person name="Torrents D."/>
            <person name="von Mering C."/>
            <person name="Zdobnov E.M."/>
            <person name="Makova K."/>
            <person name="Nekrutenko A."/>
            <person name="Elnitski L."/>
            <person name="Eswara P."/>
            <person name="King D.C."/>
            <person name="Yang S.-P."/>
            <person name="Tyekucheva S."/>
            <person name="Radakrishnan A."/>
            <person name="Harris R.S."/>
            <person name="Chiaromonte F."/>
            <person name="Taylor J."/>
            <person name="He J."/>
            <person name="Rijnkels M."/>
            <person name="Griffiths-Jones S."/>
            <person name="Ureta-Vidal A."/>
            <person name="Hoffman M.M."/>
            <person name="Severin J."/>
            <person name="Searle S.M.J."/>
            <person name="Law A.S."/>
            <person name="Speed D."/>
            <person name="Waddington D."/>
            <person name="Cheng Z."/>
            <person name="Tuzun E."/>
            <person name="Eichler E."/>
            <person name="Bao Z."/>
            <person name="Flicek P."/>
            <person name="Shteynberg D.D."/>
            <person name="Brent M.R."/>
            <person name="Bye J.M."/>
            <person name="Huckle E.J."/>
            <person name="Chatterji S."/>
            <person name="Dewey C."/>
            <person name="Pachter L."/>
            <person name="Kouranov A."/>
            <person name="Mourelatos Z."/>
            <person name="Hatzigeorgiou A.G."/>
            <person name="Paterson A.H."/>
            <person name="Ivarie R."/>
            <person name="Brandstrom M."/>
            <person name="Axelsson E."/>
            <person name="Backstrom N."/>
            <person name="Berlin S."/>
            <person name="Webster M.T."/>
            <person name="Pourquie O."/>
            <person name="Reymond A."/>
            <person name="Ucla C."/>
            <person name="Antonarakis S.E."/>
            <person name="Long M."/>
            <person name="Emerson J.J."/>
            <person name="Betran E."/>
            <person name="Dupanloup I."/>
            <person name="Kaessmann H."/>
            <person name="Hinrichs A.S."/>
            <person name="Bejerano G."/>
            <person name="Furey T.S."/>
            <person name="Harte R.A."/>
            <person name="Raney B."/>
            <person name="Siepel A."/>
            <person name="Kent W.J."/>
            <person name="Haussler D."/>
            <person name="Eyras E."/>
            <person name="Castelo R."/>
            <person name="Abril J.F."/>
            <person name="Castellano S."/>
            <person name="Camara F."/>
            <person name="Parra G."/>
            <person name="Guigo R."/>
            <person name="Bourque G."/>
            <person name="Tesler G."/>
            <person name="Pevzner P.A."/>
            <person name="Smit A."/>
            <person name="Fulton L.A."/>
            <person name="Mardis E.R."/>
            <person name="Wilson R.K."/>
        </authorList>
    </citation>
    <scope>NUCLEOTIDE SEQUENCE [LARGE SCALE GENOMIC DNA]</scope>
    <source>
        <strain>Red jungle fowl</strain>
    </source>
</reference>